<keyword id="KW-0028">Amino-acid biosynthesis</keyword>
<keyword id="KW-0963">Cytoplasm</keyword>
<keyword id="KW-0368">Histidine biosynthesis</keyword>
<keyword id="KW-0456">Lyase</keyword>
<keyword id="KW-1185">Reference proteome</keyword>
<comment type="catalytic activity">
    <reaction evidence="1">
        <text>D-erythro-1-(imidazol-4-yl)glycerol 3-phosphate = 3-(imidazol-4-yl)-2-oxopropyl phosphate + H2O</text>
        <dbReference type="Rhea" id="RHEA:11040"/>
        <dbReference type="ChEBI" id="CHEBI:15377"/>
        <dbReference type="ChEBI" id="CHEBI:57766"/>
        <dbReference type="ChEBI" id="CHEBI:58278"/>
        <dbReference type="EC" id="4.2.1.19"/>
    </reaction>
</comment>
<comment type="pathway">
    <text evidence="1">Amino-acid biosynthesis; L-histidine biosynthesis; L-histidine from 5-phospho-alpha-D-ribose 1-diphosphate: step 6/9.</text>
</comment>
<comment type="subcellular location">
    <subcellularLocation>
        <location evidence="1">Cytoplasm</location>
    </subcellularLocation>
</comment>
<comment type="similarity">
    <text evidence="1">Belongs to the imidazoleglycerol-phosphate dehydratase family.</text>
</comment>
<gene>
    <name evidence="1" type="primary">hisB</name>
    <name type="ordered locus">Desal_1555</name>
</gene>
<name>HIS7_MARSD</name>
<evidence type="ECO:0000255" key="1">
    <source>
        <dbReference type="HAMAP-Rule" id="MF_00076"/>
    </source>
</evidence>
<dbReference type="EC" id="4.2.1.19" evidence="1"/>
<dbReference type="EMBL" id="CP001649">
    <property type="protein sequence ID" value="ACS79617.1"/>
    <property type="molecule type" value="Genomic_DNA"/>
</dbReference>
<dbReference type="RefSeq" id="WP_015851435.1">
    <property type="nucleotide sequence ID" value="NC_012881.1"/>
</dbReference>
<dbReference type="SMR" id="C6BSE1"/>
<dbReference type="STRING" id="526222.Desal_1555"/>
<dbReference type="KEGG" id="dsa:Desal_1555"/>
<dbReference type="eggNOG" id="COG0131">
    <property type="taxonomic scope" value="Bacteria"/>
</dbReference>
<dbReference type="HOGENOM" id="CLU_044308_3_0_7"/>
<dbReference type="OrthoDB" id="9790411at2"/>
<dbReference type="UniPathway" id="UPA00031">
    <property type="reaction ID" value="UER00011"/>
</dbReference>
<dbReference type="Proteomes" id="UP000002601">
    <property type="component" value="Chromosome"/>
</dbReference>
<dbReference type="GO" id="GO:0005737">
    <property type="term" value="C:cytoplasm"/>
    <property type="evidence" value="ECO:0007669"/>
    <property type="project" value="UniProtKB-SubCell"/>
</dbReference>
<dbReference type="GO" id="GO:0004424">
    <property type="term" value="F:imidazoleglycerol-phosphate dehydratase activity"/>
    <property type="evidence" value="ECO:0007669"/>
    <property type="project" value="UniProtKB-UniRule"/>
</dbReference>
<dbReference type="GO" id="GO:0000105">
    <property type="term" value="P:L-histidine biosynthetic process"/>
    <property type="evidence" value="ECO:0007669"/>
    <property type="project" value="UniProtKB-UniRule"/>
</dbReference>
<dbReference type="CDD" id="cd07914">
    <property type="entry name" value="IGPD"/>
    <property type="match status" value="1"/>
</dbReference>
<dbReference type="FunFam" id="3.30.230.40:FF:000001">
    <property type="entry name" value="Imidazoleglycerol-phosphate dehydratase HisB"/>
    <property type="match status" value="1"/>
</dbReference>
<dbReference type="FunFam" id="3.30.230.40:FF:000003">
    <property type="entry name" value="Imidazoleglycerol-phosphate dehydratase HisB"/>
    <property type="match status" value="1"/>
</dbReference>
<dbReference type="Gene3D" id="3.30.230.40">
    <property type="entry name" value="Imidazole glycerol phosphate dehydratase, domain 1"/>
    <property type="match status" value="2"/>
</dbReference>
<dbReference type="HAMAP" id="MF_00076">
    <property type="entry name" value="HisB"/>
    <property type="match status" value="1"/>
</dbReference>
<dbReference type="InterPro" id="IPR038494">
    <property type="entry name" value="IGPD_sf"/>
</dbReference>
<dbReference type="InterPro" id="IPR000807">
    <property type="entry name" value="ImidazoleglycerolP_deHydtase"/>
</dbReference>
<dbReference type="InterPro" id="IPR020565">
    <property type="entry name" value="ImidazoleglycerP_deHydtase_CS"/>
</dbReference>
<dbReference type="InterPro" id="IPR020568">
    <property type="entry name" value="Ribosomal_Su5_D2-typ_SF"/>
</dbReference>
<dbReference type="NCBIfam" id="NF002111">
    <property type="entry name" value="PRK00951.2-1"/>
    <property type="match status" value="1"/>
</dbReference>
<dbReference type="NCBIfam" id="NF002114">
    <property type="entry name" value="PRK00951.2-4"/>
    <property type="match status" value="1"/>
</dbReference>
<dbReference type="PANTHER" id="PTHR23133:SF2">
    <property type="entry name" value="IMIDAZOLEGLYCEROL-PHOSPHATE DEHYDRATASE"/>
    <property type="match status" value="1"/>
</dbReference>
<dbReference type="PANTHER" id="PTHR23133">
    <property type="entry name" value="IMIDAZOLEGLYCEROL-PHOSPHATE DEHYDRATASE HIS7"/>
    <property type="match status" value="1"/>
</dbReference>
<dbReference type="Pfam" id="PF00475">
    <property type="entry name" value="IGPD"/>
    <property type="match status" value="1"/>
</dbReference>
<dbReference type="SUPFAM" id="SSF54211">
    <property type="entry name" value="Ribosomal protein S5 domain 2-like"/>
    <property type="match status" value="2"/>
</dbReference>
<dbReference type="PROSITE" id="PS00954">
    <property type="entry name" value="IGP_DEHYDRATASE_1"/>
    <property type="match status" value="1"/>
</dbReference>
<dbReference type="PROSITE" id="PS00955">
    <property type="entry name" value="IGP_DEHYDRATASE_2"/>
    <property type="match status" value="1"/>
</dbReference>
<accession>C6BSE1</accession>
<protein>
    <recommendedName>
        <fullName evidence="1">Imidazoleglycerol-phosphate dehydratase</fullName>
        <shortName evidence="1">IGPD</shortName>
        <ecNumber evidence="1">4.2.1.19</ecNumber>
    </recommendedName>
</protein>
<feature type="chain" id="PRO_1000202510" description="Imidazoleglycerol-phosphate dehydratase">
    <location>
        <begin position="1"/>
        <end position="195"/>
    </location>
</feature>
<reference key="1">
    <citation type="submission" date="2009-06" db="EMBL/GenBank/DDBJ databases">
        <title>Complete sequence of Desulfovibrio salexigens DSM 2638.</title>
        <authorList>
            <consortium name="US DOE Joint Genome Institute"/>
            <person name="Lucas S."/>
            <person name="Copeland A."/>
            <person name="Lapidus A."/>
            <person name="Glavina del Rio T."/>
            <person name="Tice H."/>
            <person name="Bruce D."/>
            <person name="Goodwin L."/>
            <person name="Pitluck S."/>
            <person name="Munk A.C."/>
            <person name="Brettin T."/>
            <person name="Detter J.C."/>
            <person name="Han C."/>
            <person name="Tapia R."/>
            <person name="Larimer F."/>
            <person name="Land M."/>
            <person name="Hauser L."/>
            <person name="Kyrpides N."/>
            <person name="Anderson I."/>
            <person name="Wall J.D."/>
            <person name="Arkin A.P."/>
            <person name="Dehal P."/>
            <person name="Chivian D."/>
            <person name="Giles B."/>
            <person name="Hazen T.C."/>
        </authorList>
    </citation>
    <scope>NUCLEOTIDE SEQUENCE [LARGE SCALE GENOMIC DNA]</scope>
    <source>
        <strain>ATCC 14822 / DSM 2638 / NCIMB 8403 / VKM B-1763</strain>
    </source>
</reference>
<organism>
    <name type="scientific">Maridesulfovibrio salexigens (strain ATCC 14822 / DSM 2638 / NCIMB 8403 / VKM B-1763)</name>
    <name type="common">Desulfovibrio salexigens</name>
    <dbReference type="NCBI Taxonomy" id="526222"/>
    <lineage>
        <taxon>Bacteria</taxon>
        <taxon>Pseudomonadati</taxon>
        <taxon>Thermodesulfobacteriota</taxon>
        <taxon>Desulfovibrionia</taxon>
        <taxon>Desulfovibrionales</taxon>
        <taxon>Desulfovibrionaceae</taxon>
        <taxon>Maridesulfovibrio</taxon>
    </lineage>
</organism>
<proteinExistence type="inferred from homology"/>
<sequence>MSQRSAAIARTTKETDISLKLNIDGEGNTNIDTGVGFADHMLTLMSFWAGFDLDLKCKGDLEIDSHHTLEDIALVLGQVLSEAMGDKKGINRIGFAKVPMDEALVEVVIDLSGRAYLVYDDDILPPIIAGDERDVWREFFKSLAFKAGMNLHIKFEYGRNGHHLLEGAFKALGLAFRNALSVERQGVSSTKGSLD</sequence>